<gene>
    <name type="primary">RPL9</name>
</gene>
<dbReference type="EMBL" id="AY911321">
    <property type="protein sequence ID" value="AAW82089.1"/>
    <property type="status" value="ALT_FRAME"/>
    <property type="molecule type" value="mRNA"/>
</dbReference>
<dbReference type="EMBL" id="BC103427">
    <property type="protein sequence ID" value="AAI03428.2"/>
    <property type="status" value="ALT_INIT"/>
    <property type="molecule type" value="mRNA"/>
</dbReference>
<dbReference type="RefSeq" id="NP_001019640.2">
    <property type="nucleotide sequence ID" value="NM_001024469.3"/>
</dbReference>
<dbReference type="RefSeq" id="XP_059743335.1">
    <property type="nucleotide sequence ID" value="XM_059887352.1"/>
</dbReference>
<dbReference type="SMR" id="Q3SYR7"/>
<dbReference type="FunCoup" id="Q3SYR7">
    <property type="interactions" value="2414"/>
</dbReference>
<dbReference type="STRING" id="9913.ENSBTAP00000019298"/>
<dbReference type="PaxDb" id="9913-ENSBTAP00000019298"/>
<dbReference type="PeptideAtlas" id="Q3SYR7"/>
<dbReference type="Ensembl" id="ENSBTAT00000019298.6">
    <property type="protein sequence ID" value="ENSBTAP00000019298.5"/>
    <property type="gene ID" value="ENSBTAG00000014518.6"/>
</dbReference>
<dbReference type="GeneID" id="282884"/>
<dbReference type="KEGG" id="bta:282884"/>
<dbReference type="CTD" id="6133"/>
<dbReference type="VEuPathDB" id="HostDB:ENSBTAG00000014518"/>
<dbReference type="eggNOG" id="KOG3255">
    <property type="taxonomic scope" value="Eukaryota"/>
</dbReference>
<dbReference type="GeneTree" id="ENSGT00390000015224"/>
<dbReference type="HOGENOM" id="CLU_065464_0_2_1"/>
<dbReference type="InParanoid" id="Q3SYR7"/>
<dbReference type="OMA" id="CASHITN"/>
<dbReference type="OrthoDB" id="10252633at2759"/>
<dbReference type="TreeFam" id="TF300033"/>
<dbReference type="Reactome" id="R-BTA-156827">
    <property type="pathway name" value="L13a-mediated translational silencing of Ceruloplasmin expression"/>
</dbReference>
<dbReference type="Reactome" id="R-BTA-1799339">
    <property type="pathway name" value="SRP-dependent cotranslational protein targeting to membrane"/>
</dbReference>
<dbReference type="Reactome" id="R-BTA-6791226">
    <property type="pathway name" value="Major pathway of rRNA processing in the nucleolus and cytosol"/>
</dbReference>
<dbReference type="Reactome" id="R-BTA-72689">
    <property type="pathway name" value="Formation of a pool of free 40S subunits"/>
</dbReference>
<dbReference type="Reactome" id="R-BTA-72706">
    <property type="pathway name" value="GTP hydrolysis and joining of the 60S ribosomal subunit"/>
</dbReference>
<dbReference type="Reactome" id="R-BTA-975956">
    <property type="pathway name" value="Nonsense Mediated Decay (NMD) independent of the Exon Junction Complex (EJC)"/>
</dbReference>
<dbReference type="Reactome" id="R-BTA-975957">
    <property type="pathway name" value="Nonsense Mediated Decay (NMD) enhanced by the Exon Junction Complex (EJC)"/>
</dbReference>
<dbReference type="CD-CODE" id="D7FE2080">
    <property type="entry name" value="Nucleolus"/>
</dbReference>
<dbReference type="Proteomes" id="UP000009136">
    <property type="component" value="Chromosome 6"/>
</dbReference>
<dbReference type="Bgee" id="ENSBTAG00000014518">
    <property type="expression patterns" value="Expressed in isthmus of fallopian tube and 106 other cell types or tissues"/>
</dbReference>
<dbReference type="GO" id="GO:0022625">
    <property type="term" value="C:cytosolic large ribosomal subunit"/>
    <property type="evidence" value="ECO:0000318"/>
    <property type="project" value="GO_Central"/>
</dbReference>
<dbReference type="GO" id="GO:0019843">
    <property type="term" value="F:rRNA binding"/>
    <property type="evidence" value="ECO:0007669"/>
    <property type="project" value="InterPro"/>
</dbReference>
<dbReference type="GO" id="GO:0003735">
    <property type="term" value="F:structural constituent of ribosome"/>
    <property type="evidence" value="ECO:0000318"/>
    <property type="project" value="GO_Central"/>
</dbReference>
<dbReference type="GO" id="GO:0002181">
    <property type="term" value="P:cytoplasmic translation"/>
    <property type="evidence" value="ECO:0000318"/>
    <property type="project" value="GO_Central"/>
</dbReference>
<dbReference type="FunFam" id="3.90.930.12:FF:000003">
    <property type="entry name" value="60S ribosomal protein L9"/>
    <property type="match status" value="1"/>
</dbReference>
<dbReference type="FunFam" id="3.90.930.12:FF:000005">
    <property type="entry name" value="60S ribosomal protein L9"/>
    <property type="match status" value="1"/>
</dbReference>
<dbReference type="Gene3D" id="3.90.930.12">
    <property type="entry name" value="Ribosomal protein L6, alpha-beta domain"/>
    <property type="match status" value="2"/>
</dbReference>
<dbReference type="InterPro" id="IPR000702">
    <property type="entry name" value="Ribosomal_uL6-like"/>
</dbReference>
<dbReference type="InterPro" id="IPR036789">
    <property type="entry name" value="Ribosomal_uL6-like_a/b-dom_sf"/>
</dbReference>
<dbReference type="InterPro" id="IPR020040">
    <property type="entry name" value="Ribosomal_uL6_a/b-dom"/>
</dbReference>
<dbReference type="InterPro" id="IPR002359">
    <property type="entry name" value="Ribosomal_uL6_CS2"/>
</dbReference>
<dbReference type="PANTHER" id="PTHR11655">
    <property type="entry name" value="60S/50S RIBOSOMAL PROTEIN L6/L9"/>
    <property type="match status" value="1"/>
</dbReference>
<dbReference type="PANTHER" id="PTHR11655:SF46">
    <property type="entry name" value="LARGE RIBOSOMAL SUBUNIT PROTEIN UL6"/>
    <property type="match status" value="1"/>
</dbReference>
<dbReference type="Pfam" id="PF00347">
    <property type="entry name" value="Ribosomal_L6"/>
    <property type="match status" value="2"/>
</dbReference>
<dbReference type="PIRSF" id="PIRSF002162">
    <property type="entry name" value="Ribosomal_L6"/>
    <property type="match status" value="1"/>
</dbReference>
<dbReference type="SUPFAM" id="SSF56053">
    <property type="entry name" value="Ribosomal protein L6"/>
    <property type="match status" value="2"/>
</dbReference>
<dbReference type="PROSITE" id="PS00700">
    <property type="entry name" value="RIBOSOMAL_L6_2"/>
    <property type="match status" value="1"/>
</dbReference>
<feature type="chain" id="PRO_0000230773" description="Large ribosomal subunit protein uL6">
    <location>
        <begin position="1"/>
        <end position="192"/>
    </location>
</feature>
<feature type="modified residue" description="N6-acetyllysine" evidence="1">
    <location>
        <position position="121"/>
    </location>
</feature>
<comment type="function">
    <text evidence="1">Component of the large ribosomal subunit. The ribosome is a large ribonucleoprotein complex responsible for the synthesis of proteins in the cell.</text>
</comment>
<comment type="subunit">
    <text evidence="1">Component of the large ribosomal subunit.</text>
</comment>
<comment type="subcellular location">
    <subcellularLocation>
        <location evidence="1">Cytoplasm</location>
    </subcellularLocation>
</comment>
<comment type="similarity">
    <text evidence="2">Belongs to the universal ribosomal protein uL6 family.</text>
</comment>
<comment type="sequence caution" evidence="2">
    <conflict type="erroneous initiation">
        <sequence resource="EMBL-CDS" id="AAI03428"/>
    </conflict>
</comment>
<comment type="sequence caution" evidence="2">
    <conflict type="frameshift">
        <sequence resource="EMBL-CDS" id="AAW82089"/>
    </conflict>
</comment>
<protein>
    <recommendedName>
        <fullName evidence="2">Large ribosomal subunit protein uL6</fullName>
    </recommendedName>
    <alternativeName>
        <fullName>60S ribosomal protein L9</fullName>
    </alternativeName>
</protein>
<name>RL9_BOVIN</name>
<reference key="1">
    <citation type="submission" date="2005-01" db="EMBL/GenBank/DDBJ databases">
        <title>Analysis of sequences obtained from constructed full-length bovine cDNA libraries.</title>
        <authorList>
            <person name="Yu J."/>
            <person name="Meng Y."/>
            <person name="Wang Z."/>
            <person name="Hansen C."/>
            <person name="Li C."/>
            <person name="Moore S.S."/>
        </authorList>
    </citation>
    <scope>NUCLEOTIDE SEQUENCE [LARGE SCALE MRNA]</scope>
    <source>
        <tissue>Lymphoid epithelium</tissue>
    </source>
</reference>
<reference key="2">
    <citation type="submission" date="2007-03" db="EMBL/GenBank/DDBJ databases">
        <authorList>
            <consortium name="NIH - Mammalian Gene Collection (MGC) project"/>
        </authorList>
    </citation>
    <scope>NUCLEOTIDE SEQUENCE [LARGE SCALE MRNA]</scope>
    <source>
        <strain>Hereford</strain>
        <tissue>Testis</tissue>
    </source>
</reference>
<keyword id="KW-0007">Acetylation</keyword>
<keyword id="KW-0963">Cytoplasm</keyword>
<keyword id="KW-1185">Reference proteome</keyword>
<keyword id="KW-0687">Ribonucleoprotein</keyword>
<keyword id="KW-0689">Ribosomal protein</keyword>
<accession>Q3SYR7</accession>
<accession>Q56K06</accession>
<sequence length="192" mass="21876">MKTILSNQTVDIPENVDINLKGRTVIVKGPRGTLRRDFNHINVELSLLGKKKKRLRVDKWWGNRKELATVRTICSHVQNMIKGVTLGFRYKMRSVYAHFPINVVIQENGSLVEIRNFLGEKYIRRVRMRPGVACSVSQAQKDELILEGNDIELVSNSAALIQQATTVKNKDIRKFLDGIYVSEKGTVQQADE</sequence>
<organism>
    <name type="scientific">Bos taurus</name>
    <name type="common">Bovine</name>
    <dbReference type="NCBI Taxonomy" id="9913"/>
    <lineage>
        <taxon>Eukaryota</taxon>
        <taxon>Metazoa</taxon>
        <taxon>Chordata</taxon>
        <taxon>Craniata</taxon>
        <taxon>Vertebrata</taxon>
        <taxon>Euteleostomi</taxon>
        <taxon>Mammalia</taxon>
        <taxon>Eutheria</taxon>
        <taxon>Laurasiatheria</taxon>
        <taxon>Artiodactyla</taxon>
        <taxon>Ruminantia</taxon>
        <taxon>Pecora</taxon>
        <taxon>Bovidae</taxon>
        <taxon>Bovinae</taxon>
        <taxon>Bos</taxon>
    </lineage>
</organism>
<evidence type="ECO:0000250" key="1">
    <source>
        <dbReference type="UniProtKB" id="P32969"/>
    </source>
</evidence>
<evidence type="ECO:0000305" key="2"/>
<proteinExistence type="evidence at transcript level"/>